<comment type="sequence caution" evidence="2">
    <conflict type="erroneous gene model prediction">
        <sequence resource="EMBL-CDS" id="EAL67329"/>
    </conflict>
</comment>
<reference key="1">
    <citation type="journal article" date="2005" name="Nature">
        <title>The genome of the social amoeba Dictyostelium discoideum.</title>
        <authorList>
            <person name="Eichinger L."/>
            <person name="Pachebat J.A."/>
            <person name="Gloeckner G."/>
            <person name="Rajandream M.A."/>
            <person name="Sucgang R."/>
            <person name="Berriman M."/>
            <person name="Song J."/>
            <person name="Olsen R."/>
            <person name="Szafranski K."/>
            <person name="Xu Q."/>
            <person name="Tunggal B."/>
            <person name="Kummerfeld S."/>
            <person name="Madera M."/>
            <person name="Konfortov B.A."/>
            <person name="Rivero F."/>
            <person name="Bankier A.T."/>
            <person name="Lehmann R."/>
            <person name="Hamlin N."/>
            <person name="Davies R."/>
            <person name="Gaudet P."/>
            <person name="Fey P."/>
            <person name="Pilcher K."/>
            <person name="Chen G."/>
            <person name="Saunders D."/>
            <person name="Sodergren E.J."/>
            <person name="Davis P."/>
            <person name="Kerhornou A."/>
            <person name="Nie X."/>
            <person name="Hall N."/>
            <person name="Anjard C."/>
            <person name="Hemphill L."/>
            <person name="Bason N."/>
            <person name="Farbrother P."/>
            <person name="Desany B."/>
            <person name="Just E."/>
            <person name="Morio T."/>
            <person name="Rost R."/>
            <person name="Churcher C.M."/>
            <person name="Cooper J."/>
            <person name="Haydock S."/>
            <person name="van Driessche N."/>
            <person name="Cronin A."/>
            <person name="Goodhead I."/>
            <person name="Muzny D.M."/>
            <person name="Mourier T."/>
            <person name="Pain A."/>
            <person name="Lu M."/>
            <person name="Harper D."/>
            <person name="Lindsay R."/>
            <person name="Hauser H."/>
            <person name="James K.D."/>
            <person name="Quiles M."/>
            <person name="Madan Babu M."/>
            <person name="Saito T."/>
            <person name="Buchrieser C."/>
            <person name="Wardroper A."/>
            <person name="Felder M."/>
            <person name="Thangavelu M."/>
            <person name="Johnson D."/>
            <person name="Knights A."/>
            <person name="Loulseged H."/>
            <person name="Mungall K.L."/>
            <person name="Oliver K."/>
            <person name="Price C."/>
            <person name="Quail M.A."/>
            <person name="Urushihara H."/>
            <person name="Hernandez J."/>
            <person name="Rabbinowitsch E."/>
            <person name="Steffen D."/>
            <person name="Sanders M."/>
            <person name="Ma J."/>
            <person name="Kohara Y."/>
            <person name="Sharp S."/>
            <person name="Simmonds M.N."/>
            <person name="Spiegler S."/>
            <person name="Tivey A."/>
            <person name="Sugano S."/>
            <person name="White B."/>
            <person name="Walker D."/>
            <person name="Woodward J.R."/>
            <person name="Winckler T."/>
            <person name="Tanaka Y."/>
            <person name="Shaulsky G."/>
            <person name="Schleicher M."/>
            <person name="Weinstock G.M."/>
            <person name="Rosenthal A."/>
            <person name="Cox E.C."/>
            <person name="Chisholm R.L."/>
            <person name="Gibbs R.A."/>
            <person name="Loomis W.F."/>
            <person name="Platzer M."/>
            <person name="Kay R.R."/>
            <person name="Williams J.G."/>
            <person name="Dear P.H."/>
            <person name="Noegel A.A."/>
            <person name="Barrell B.G."/>
            <person name="Kuspa A."/>
        </authorList>
    </citation>
    <scope>NUCLEOTIDE SEQUENCE [LARGE SCALE GENOMIC DNA]</scope>
    <source>
        <strain>AX4</strain>
    </source>
</reference>
<evidence type="ECO:0000256" key="1">
    <source>
        <dbReference type="SAM" id="MobiDB-lite"/>
    </source>
</evidence>
<evidence type="ECO:0000305" key="2"/>
<proteinExistence type="predicted"/>
<feature type="chain" id="PRO_0000352464" description="Uncharacterized protein DDB_G0280205">
    <location>
        <begin position="1"/>
        <end position="835"/>
    </location>
</feature>
<feature type="region of interest" description="Disordered" evidence="1">
    <location>
        <begin position="1"/>
        <end position="38"/>
    </location>
</feature>
<feature type="region of interest" description="Disordered" evidence="1">
    <location>
        <begin position="317"/>
        <end position="477"/>
    </location>
</feature>
<feature type="region of interest" description="Disordered" evidence="1">
    <location>
        <begin position="489"/>
        <end position="668"/>
    </location>
</feature>
<feature type="region of interest" description="Disordered" evidence="1">
    <location>
        <begin position="721"/>
        <end position="750"/>
    </location>
</feature>
<feature type="region of interest" description="Disordered" evidence="1">
    <location>
        <begin position="810"/>
        <end position="835"/>
    </location>
</feature>
<feature type="compositionally biased region" description="Low complexity" evidence="1">
    <location>
        <begin position="7"/>
        <end position="37"/>
    </location>
</feature>
<feature type="compositionally biased region" description="Low complexity" evidence="1">
    <location>
        <begin position="328"/>
        <end position="351"/>
    </location>
</feature>
<feature type="compositionally biased region" description="Low complexity" evidence="1">
    <location>
        <begin position="361"/>
        <end position="395"/>
    </location>
</feature>
<feature type="compositionally biased region" description="Polar residues" evidence="1">
    <location>
        <begin position="396"/>
        <end position="406"/>
    </location>
</feature>
<feature type="compositionally biased region" description="Polar residues" evidence="1">
    <location>
        <begin position="415"/>
        <end position="424"/>
    </location>
</feature>
<feature type="compositionally biased region" description="Gly residues" evidence="1">
    <location>
        <begin position="432"/>
        <end position="442"/>
    </location>
</feature>
<feature type="compositionally biased region" description="Polar residues" evidence="1">
    <location>
        <begin position="449"/>
        <end position="477"/>
    </location>
</feature>
<feature type="compositionally biased region" description="Low complexity" evidence="1">
    <location>
        <begin position="489"/>
        <end position="510"/>
    </location>
</feature>
<feature type="compositionally biased region" description="Pro residues" evidence="1">
    <location>
        <begin position="511"/>
        <end position="521"/>
    </location>
</feature>
<feature type="compositionally biased region" description="Low complexity" evidence="1">
    <location>
        <begin position="522"/>
        <end position="629"/>
    </location>
</feature>
<feature type="compositionally biased region" description="Polar residues" evidence="1">
    <location>
        <begin position="631"/>
        <end position="640"/>
    </location>
</feature>
<feature type="compositionally biased region" description="Low complexity" evidence="1">
    <location>
        <begin position="641"/>
        <end position="664"/>
    </location>
</feature>
<feature type="compositionally biased region" description="Low complexity" evidence="1">
    <location>
        <begin position="724"/>
        <end position="750"/>
    </location>
</feature>
<feature type="compositionally biased region" description="Acidic residues" evidence="1">
    <location>
        <begin position="826"/>
        <end position="835"/>
    </location>
</feature>
<organism>
    <name type="scientific">Dictyostelium discoideum</name>
    <name type="common">Social amoeba</name>
    <dbReference type="NCBI Taxonomy" id="44689"/>
    <lineage>
        <taxon>Eukaryota</taxon>
        <taxon>Amoebozoa</taxon>
        <taxon>Evosea</taxon>
        <taxon>Eumycetozoa</taxon>
        <taxon>Dictyostelia</taxon>
        <taxon>Dictyosteliales</taxon>
        <taxon>Dictyosteliaceae</taxon>
        <taxon>Dictyostelium</taxon>
    </lineage>
</organism>
<name>Y6442_DICDI</name>
<gene>
    <name type="ORF">DDB_G0280205</name>
</gene>
<accession>Q54VQ0</accession>
<keyword id="KW-1185">Reference proteome</keyword>
<protein>
    <recommendedName>
        <fullName>Uncharacterized protein DDB_G0280205</fullName>
    </recommendedName>
</protein>
<sequence length="835" mass="90938">MKTSRLSTVPTSSSSTSTSSSPSSSSGSGSSTNTVGSRLFTQTKVDNSPLDFENEKELQKKLDDIVSEFRNKDKEWTFRLKALQILQRIINGNGIEFKGWSSMLRSISPALIEQLTELRSTIVKEACASVSLLGFRMKSKFEPFALQYTQALIRMVPVKTTIISESAHQTLKDILESVSTKNLLQTFLDASLDQHNEQLRKRCSEYIYIVLSRAIENDGMILVSSVPALEKSIQKLLIDGASETRQMARYCFWAYSELNEKSATLFYTHFTPTTQKNLFTVQEHLKGDQLEFCEKLKNSLFEEEQHQKMVEDSNDLDFDLNDFKKDNNNNNNNDNNNNNNTSTTRSKTPTTGRASGLKIRSSTNTTPTTTTTTTTTTTPNKTQSSSSTSLRSGSSIGNRTEVSSSIKRPLDASNIIRSKSSLGTTRKDVITGGSGGGGGGGMSTSSQSPISKTPTTMITKTASSSSPNLATSTQSGRYSSIGTRAITTSLSKQSSSSNLTRSLPPIIKSPISPPGPTPPAPTLTKSKSTPSSPLSTPTPSKLSSSTNTTTSTSTTTTSTTPTRRISSSTTSSPIGSTTTSALKRPSTLTSTPKSSSSSSSSSSSATLSSTKTPSTTATNSTTSSATKKSFITKTNPTDEQTTTPKSITKTTTTTTTANSTSTSSIKRRSDNVDEIDIESLEISLNQDNKLAFNEISDEISNNLRDAKKGLSFYEKELTLDDLENNNNNNSNSNSNSNSNNNSKRSSVSSFTNSIKESTTADVDFNWLEDSVHDSLIDDDVLDFDENNNSTYIPRNNNNNNNNNNIIKEQQEQQEGEQQEERQQEQILDEDDELMF</sequence>
<dbReference type="EMBL" id="AAFI02000035">
    <property type="protein sequence ID" value="EAL67329.1"/>
    <property type="status" value="ALT_SEQ"/>
    <property type="molecule type" value="Genomic_DNA"/>
</dbReference>
<dbReference type="RefSeq" id="XP_641305.1">
    <property type="nucleotide sequence ID" value="XM_636213.1"/>
</dbReference>
<dbReference type="SMR" id="Q54VQ0"/>
<dbReference type="FunCoup" id="Q54VQ0">
    <property type="interactions" value="112"/>
</dbReference>
<dbReference type="STRING" id="44689.Q54VQ0"/>
<dbReference type="GlyGen" id="Q54VQ0">
    <property type="glycosylation" value="2 sites"/>
</dbReference>
<dbReference type="PaxDb" id="44689-DDB0206443"/>
<dbReference type="EnsemblProtists" id="EAL67329">
    <property type="protein sequence ID" value="EAL67329"/>
    <property type="gene ID" value="DDB_G0280205"/>
</dbReference>
<dbReference type="GeneID" id="8622438"/>
<dbReference type="KEGG" id="ddi:DDB_G0280205"/>
<dbReference type="VEuPathDB" id="AmoebaDB:DDB_G0280205"/>
<dbReference type="VEuPathDB" id="AmoebaDB:DDB_G0280207"/>
<dbReference type="InParanoid" id="Q54VQ0"/>
<dbReference type="PRO" id="PR:Q54VQ0"/>
<dbReference type="Proteomes" id="UP000002195">
    <property type="component" value="Chromosome 3"/>
</dbReference>
<dbReference type="GO" id="GO:0005881">
    <property type="term" value="C:cytoplasmic microtubule"/>
    <property type="evidence" value="ECO:0000318"/>
    <property type="project" value="GO_Central"/>
</dbReference>
<dbReference type="GO" id="GO:0005819">
    <property type="term" value="C:spindle"/>
    <property type="evidence" value="ECO:0007669"/>
    <property type="project" value="UniProtKB-ARBA"/>
</dbReference>
<dbReference type="GO" id="GO:0008017">
    <property type="term" value="F:microtubule binding"/>
    <property type="evidence" value="ECO:0000318"/>
    <property type="project" value="GO_Central"/>
</dbReference>
<dbReference type="GO" id="GO:0000226">
    <property type="term" value="P:microtubule cytoskeleton organization"/>
    <property type="evidence" value="ECO:0000318"/>
    <property type="project" value="GO_Central"/>
</dbReference>
<dbReference type="GO" id="GO:0000278">
    <property type="term" value="P:mitotic cell cycle"/>
    <property type="evidence" value="ECO:0007669"/>
    <property type="project" value="UniProtKB-ARBA"/>
</dbReference>
<dbReference type="Gene3D" id="1.25.10.10">
    <property type="entry name" value="Leucine-rich Repeat Variant"/>
    <property type="match status" value="1"/>
</dbReference>
<dbReference type="InterPro" id="IPR011989">
    <property type="entry name" value="ARM-like"/>
</dbReference>
<dbReference type="InterPro" id="IPR016024">
    <property type="entry name" value="ARM-type_fold"/>
</dbReference>
<dbReference type="InterPro" id="IPR024395">
    <property type="entry name" value="CLASP_N_dom"/>
</dbReference>
<dbReference type="InterPro" id="IPR034085">
    <property type="entry name" value="TOG"/>
</dbReference>
<dbReference type="PANTHER" id="PTHR21567">
    <property type="entry name" value="CLASP"/>
    <property type="match status" value="1"/>
</dbReference>
<dbReference type="PANTHER" id="PTHR21567:SF9">
    <property type="entry name" value="CLIP-ASSOCIATING PROTEIN"/>
    <property type="match status" value="1"/>
</dbReference>
<dbReference type="Pfam" id="PF12348">
    <property type="entry name" value="CLASP_N"/>
    <property type="match status" value="1"/>
</dbReference>
<dbReference type="SMART" id="SM01349">
    <property type="entry name" value="TOG"/>
    <property type="match status" value="1"/>
</dbReference>
<dbReference type="SUPFAM" id="SSF48371">
    <property type="entry name" value="ARM repeat"/>
    <property type="match status" value="1"/>
</dbReference>